<dbReference type="EC" id="1.2.1.41" evidence="1"/>
<dbReference type="EMBL" id="CP000769">
    <property type="protein sequence ID" value="ABS24445.1"/>
    <property type="molecule type" value="Genomic_DNA"/>
</dbReference>
<dbReference type="RefSeq" id="WP_011984551.1">
    <property type="nucleotide sequence ID" value="NC_009675.1"/>
</dbReference>
<dbReference type="SMR" id="A7H6U9"/>
<dbReference type="STRING" id="404589.Anae109_0227"/>
<dbReference type="KEGG" id="afw:Anae109_0227"/>
<dbReference type="eggNOG" id="COG0014">
    <property type="taxonomic scope" value="Bacteria"/>
</dbReference>
<dbReference type="HOGENOM" id="CLU_030231_0_0_7"/>
<dbReference type="OrthoDB" id="9809970at2"/>
<dbReference type="UniPathway" id="UPA00098">
    <property type="reaction ID" value="UER00360"/>
</dbReference>
<dbReference type="Proteomes" id="UP000006382">
    <property type="component" value="Chromosome"/>
</dbReference>
<dbReference type="GO" id="GO:0005737">
    <property type="term" value="C:cytoplasm"/>
    <property type="evidence" value="ECO:0007669"/>
    <property type="project" value="UniProtKB-SubCell"/>
</dbReference>
<dbReference type="GO" id="GO:0004350">
    <property type="term" value="F:glutamate-5-semialdehyde dehydrogenase activity"/>
    <property type="evidence" value="ECO:0007669"/>
    <property type="project" value="UniProtKB-UniRule"/>
</dbReference>
<dbReference type="GO" id="GO:0050661">
    <property type="term" value="F:NADP binding"/>
    <property type="evidence" value="ECO:0007669"/>
    <property type="project" value="InterPro"/>
</dbReference>
<dbReference type="GO" id="GO:0055129">
    <property type="term" value="P:L-proline biosynthetic process"/>
    <property type="evidence" value="ECO:0007669"/>
    <property type="project" value="UniProtKB-UniRule"/>
</dbReference>
<dbReference type="CDD" id="cd07079">
    <property type="entry name" value="ALDH_F18-19_ProA-GPR"/>
    <property type="match status" value="1"/>
</dbReference>
<dbReference type="FunFam" id="3.40.309.10:FF:000006">
    <property type="entry name" value="Gamma-glutamyl phosphate reductase"/>
    <property type="match status" value="1"/>
</dbReference>
<dbReference type="Gene3D" id="3.40.605.10">
    <property type="entry name" value="Aldehyde Dehydrogenase, Chain A, domain 1"/>
    <property type="match status" value="1"/>
</dbReference>
<dbReference type="Gene3D" id="3.40.309.10">
    <property type="entry name" value="Aldehyde Dehydrogenase, Chain A, domain 2"/>
    <property type="match status" value="1"/>
</dbReference>
<dbReference type="HAMAP" id="MF_00412">
    <property type="entry name" value="ProA"/>
    <property type="match status" value="1"/>
</dbReference>
<dbReference type="InterPro" id="IPR016161">
    <property type="entry name" value="Ald_DH/histidinol_DH"/>
</dbReference>
<dbReference type="InterPro" id="IPR016163">
    <property type="entry name" value="Ald_DH_C"/>
</dbReference>
<dbReference type="InterPro" id="IPR016162">
    <property type="entry name" value="Ald_DH_N"/>
</dbReference>
<dbReference type="InterPro" id="IPR015590">
    <property type="entry name" value="Aldehyde_DH_dom"/>
</dbReference>
<dbReference type="InterPro" id="IPR020593">
    <property type="entry name" value="G-glutamylP_reductase_CS"/>
</dbReference>
<dbReference type="InterPro" id="IPR012134">
    <property type="entry name" value="Glu-5-SA_DH"/>
</dbReference>
<dbReference type="InterPro" id="IPR000965">
    <property type="entry name" value="GPR_dom"/>
</dbReference>
<dbReference type="NCBIfam" id="NF001221">
    <property type="entry name" value="PRK00197.1"/>
    <property type="match status" value="1"/>
</dbReference>
<dbReference type="NCBIfam" id="TIGR00407">
    <property type="entry name" value="proA"/>
    <property type="match status" value="1"/>
</dbReference>
<dbReference type="PANTHER" id="PTHR11063:SF8">
    <property type="entry name" value="DELTA-1-PYRROLINE-5-CARBOXYLATE SYNTHASE"/>
    <property type="match status" value="1"/>
</dbReference>
<dbReference type="PANTHER" id="PTHR11063">
    <property type="entry name" value="GLUTAMATE SEMIALDEHYDE DEHYDROGENASE"/>
    <property type="match status" value="1"/>
</dbReference>
<dbReference type="Pfam" id="PF00171">
    <property type="entry name" value="Aldedh"/>
    <property type="match status" value="1"/>
</dbReference>
<dbReference type="PIRSF" id="PIRSF000151">
    <property type="entry name" value="GPR"/>
    <property type="match status" value="1"/>
</dbReference>
<dbReference type="SUPFAM" id="SSF53720">
    <property type="entry name" value="ALDH-like"/>
    <property type="match status" value="1"/>
</dbReference>
<dbReference type="PROSITE" id="PS01223">
    <property type="entry name" value="PROA"/>
    <property type="match status" value="1"/>
</dbReference>
<keyword id="KW-0028">Amino-acid biosynthesis</keyword>
<keyword id="KW-0963">Cytoplasm</keyword>
<keyword id="KW-0521">NADP</keyword>
<keyword id="KW-0560">Oxidoreductase</keyword>
<keyword id="KW-0641">Proline biosynthesis</keyword>
<keyword id="KW-1185">Reference proteome</keyword>
<gene>
    <name evidence="1" type="primary">proA</name>
    <name type="ordered locus">Anae109_0227</name>
</gene>
<evidence type="ECO:0000255" key="1">
    <source>
        <dbReference type="HAMAP-Rule" id="MF_00412"/>
    </source>
</evidence>
<feature type="chain" id="PRO_1000049934" description="Gamma-glutamyl phosphate reductase">
    <location>
        <begin position="1"/>
        <end position="428"/>
    </location>
</feature>
<organism>
    <name type="scientific">Anaeromyxobacter sp. (strain Fw109-5)</name>
    <dbReference type="NCBI Taxonomy" id="404589"/>
    <lineage>
        <taxon>Bacteria</taxon>
        <taxon>Pseudomonadati</taxon>
        <taxon>Myxococcota</taxon>
        <taxon>Myxococcia</taxon>
        <taxon>Myxococcales</taxon>
        <taxon>Cystobacterineae</taxon>
        <taxon>Anaeromyxobacteraceae</taxon>
        <taxon>Anaeromyxobacter</taxon>
    </lineage>
</organism>
<protein>
    <recommendedName>
        <fullName evidence="1">Gamma-glutamyl phosphate reductase</fullName>
        <shortName evidence="1">GPR</shortName>
        <ecNumber evidence="1">1.2.1.41</ecNumber>
    </recommendedName>
    <alternativeName>
        <fullName evidence="1">Glutamate-5-semialdehyde dehydrogenase</fullName>
    </alternativeName>
    <alternativeName>
        <fullName evidence="1">Glutamyl-gamma-semialdehyde dehydrogenase</fullName>
        <shortName evidence="1">GSA dehydrogenase</shortName>
    </alternativeName>
</protein>
<name>PROA_ANADF</name>
<comment type="function">
    <text evidence="1">Catalyzes the NADPH-dependent reduction of L-glutamate 5-phosphate into L-glutamate 5-semialdehyde and phosphate. The product spontaneously undergoes cyclization to form 1-pyrroline-5-carboxylate.</text>
</comment>
<comment type="catalytic activity">
    <reaction evidence="1">
        <text>L-glutamate 5-semialdehyde + phosphate + NADP(+) = L-glutamyl 5-phosphate + NADPH + H(+)</text>
        <dbReference type="Rhea" id="RHEA:19541"/>
        <dbReference type="ChEBI" id="CHEBI:15378"/>
        <dbReference type="ChEBI" id="CHEBI:43474"/>
        <dbReference type="ChEBI" id="CHEBI:57783"/>
        <dbReference type="ChEBI" id="CHEBI:58066"/>
        <dbReference type="ChEBI" id="CHEBI:58274"/>
        <dbReference type="ChEBI" id="CHEBI:58349"/>
        <dbReference type="EC" id="1.2.1.41"/>
    </reaction>
</comment>
<comment type="pathway">
    <text evidence="1">Amino-acid biosynthesis; L-proline biosynthesis; L-glutamate 5-semialdehyde from L-glutamate: step 2/2.</text>
</comment>
<comment type="subcellular location">
    <subcellularLocation>
        <location evidence="1">Cytoplasm</location>
    </subcellularLocation>
</comment>
<comment type="similarity">
    <text evidence="1">Belongs to the gamma-glutamyl phosphate reductase family.</text>
</comment>
<accession>A7H6U9</accession>
<reference key="1">
    <citation type="journal article" date="2015" name="Genome Announc.">
        <title>Complete genome sequence of Anaeromyxobacter sp. Fw109-5, an anaerobic, metal-reducing bacterium isolated from a contaminated subsurface environment.</title>
        <authorList>
            <person name="Hwang C."/>
            <person name="Copeland A."/>
            <person name="Lucas S."/>
            <person name="Lapidus A."/>
            <person name="Barry K."/>
            <person name="Glavina Del Rio T."/>
            <person name="Dalin E."/>
            <person name="Tice H."/>
            <person name="Pitluck S."/>
            <person name="Sims D."/>
            <person name="Brettin T."/>
            <person name="Bruce D.C."/>
            <person name="Detter J.C."/>
            <person name="Han C.S."/>
            <person name="Schmutz J."/>
            <person name="Larimer F.W."/>
            <person name="Land M.L."/>
            <person name="Hauser L.J."/>
            <person name="Kyrpides N."/>
            <person name="Lykidis A."/>
            <person name="Richardson P."/>
            <person name="Belieav A."/>
            <person name="Sanford R.A."/>
            <person name="Loeffler F.E."/>
            <person name="Fields M.W."/>
        </authorList>
    </citation>
    <scope>NUCLEOTIDE SEQUENCE [LARGE SCALE GENOMIC DNA]</scope>
    <source>
        <strain>Fw109-5</strain>
    </source>
</reference>
<proteinExistence type="inferred from homology"/>
<sequence>MRQPASEGLAAEMRRLAEASSDASRALSRAQPRAKDEALRAAADAIGRRAKEILAASAEDVAAARAAGQSAAYLDRLALDPKRLDGIAAALREVAALPDPVGEVTATWRRPNGLSVKKVRIPLGVVLMVYEARPNVTVDAAALCVKSGNAAILRPGSDALRSSLALAAAFAEGLAAAGLPAASAQVVPTSDREATFELLQLDDLIDLAIPRGGPSLIRAVAERSRVPVVKHYQGVCHLFLDQSAPLQQAIDLALNGKVQRPAVCNALECLLVHREAAGRLLPAVGRALVDAGVELRSCPTSTTILARAGVPAVTAAPDDYGKEFSDLILAVRVVHDLDGALDHIARYGSLHTEAILTRDLASARRFEREVTASAVMVNASTRFNDGGELGLGAEIGISTTKLHAFGPMGLAELTTQKFVVEGDGQVRS</sequence>